<reference key="1">
    <citation type="journal article" date="2001" name="Proc. Natl. Acad. Sci. U.S.A.">
        <title>Complete genome sequence of Caulobacter crescentus.</title>
        <authorList>
            <person name="Nierman W.C."/>
            <person name="Feldblyum T.V."/>
            <person name="Laub M.T."/>
            <person name="Paulsen I.T."/>
            <person name="Nelson K.E."/>
            <person name="Eisen J.A."/>
            <person name="Heidelberg J.F."/>
            <person name="Alley M.R.K."/>
            <person name="Ohta N."/>
            <person name="Maddock J.R."/>
            <person name="Potocka I."/>
            <person name="Nelson W.C."/>
            <person name="Newton A."/>
            <person name="Stephens C."/>
            <person name="Phadke N.D."/>
            <person name="Ely B."/>
            <person name="DeBoy R.T."/>
            <person name="Dodson R.J."/>
            <person name="Durkin A.S."/>
            <person name="Gwinn M.L."/>
            <person name="Haft D.H."/>
            <person name="Kolonay J.F."/>
            <person name="Smit J."/>
            <person name="Craven M.B."/>
            <person name="Khouri H.M."/>
            <person name="Shetty J."/>
            <person name="Berry K.J."/>
            <person name="Utterback T.R."/>
            <person name="Tran K."/>
            <person name="Wolf A.M."/>
            <person name="Vamathevan J.J."/>
            <person name="Ermolaeva M.D."/>
            <person name="White O."/>
            <person name="Salzberg S.L."/>
            <person name="Venter J.C."/>
            <person name="Shapiro L."/>
            <person name="Fraser C.M."/>
        </authorList>
    </citation>
    <scope>NUCLEOTIDE SEQUENCE [LARGE SCALE GENOMIC DNA]</scope>
    <source>
        <strain>ATCC 19089 / CIP 103742 / CB 15</strain>
    </source>
</reference>
<name>PLSY_CAUVC</name>
<sequence length="218" mass="22527">MQDLAAIAYLTLGIAIVGGYLLGSIPFGLIATRLGGAGDIRQIGSGNIGATNVLRSGRKDLAAITLLGDAGKGVVAVLLARYLTNGNPAIIALAGGSAFLGHLFPVWLKFKGGKGVATFYGVLLSAAWPVGVAAGATWLAMAFLFRISSLAALTAAVLAAPFALAFDQPYPFMGLCLFMAVLIFIRHRENIARLLKGEEPKIGKKKPAEEAPPAPDAP</sequence>
<evidence type="ECO:0000255" key="1">
    <source>
        <dbReference type="HAMAP-Rule" id="MF_01043"/>
    </source>
</evidence>
<dbReference type="EC" id="2.3.1.275" evidence="1"/>
<dbReference type="EMBL" id="AE005673">
    <property type="protein sequence ID" value="AAK24417.1"/>
    <property type="molecule type" value="Genomic_DNA"/>
</dbReference>
<dbReference type="PIR" id="E87552">
    <property type="entry name" value="E87552"/>
</dbReference>
<dbReference type="RefSeq" id="NP_421249.1">
    <property type="nucleotide sequence ID" value="NC_002696.2"/>
</dbReference>
<dbReference type="RefSeq" id="WP_010920304.1">
    <property type="nucleotide sequence ID" value="NC_002696.2"/>
</dbReference>
<dbReference type="SMR" id="Q9A5K1"/>
<dbReference type="STRING" id="190650.CC_2446"/>
<dbReference type="EnsemblBacteria" id="AAK24417">
    <property type="protein sequence ID" value="AAK24417"/>
    <property type="gene ID" value="CC_2446"/>
</dbReference>
<dbReference type="KEGG" id="ccr:CC_2446"/>
<dbReference type="PATRIC" id="fig|190650.5.peg.2463"/>
<dbReference type="eggNOG" id="COG0344">
    <property type="taxonomic scope" value="Bacteria"/>
</dbReference>
<dbReference type="HOGENOM" id="CLU_081254_1_0_5"/>
<dbReference type="BioCyc" id="CAULO:CC2446-MONOMER"/>
<dbReference type="UniPathway" id="UPA00085"/>
<dbReference type="Proteomes" id="UP000001816">
    <property type="component" value="Chromosome"/>
</dbReference>
<dbReference type="GO" id="GO:0005886">
    <property type="term" value="C:plasma membrane"/>
    <property type="evidence" value="ECO:0007669"/>
    <property type="project" value="UniProtKB-SubCell"/>
</dbReference>
<dbReference type="GO" id="GO:0043772">
    <property type="term" value="F:acyl-phosphate glycerol-3-phosphate acyltransferase activity"/>
    <property type="evidence" value="ECO:0007669"/>
    <property type="project" value="UniProtKB-UniRule"/>
</dbReference>
<dbReference type="GO" id="GO:0008654">
    <property type="term" value="P:phospholipid biosynthetic process"/>
    <property type="evidence" value="ECO:0007669"/>
    <property type="project" value="UniProtKB-UniRule"/>
</dbReference>
<dbReference type="HAMAP" id="MF_01043">
    <property type="entry name" value="PlsY"/>
    <property type="match status" value="1"/>
</dbReference>
<dbReference type="InterPro" id="IPR003811">
    <property type="entry name" value="G3P_acylTferase_PlsY"/>
</dbReference>
<dbReference type="NCBIfam" id="TIGR00023">
    <property type="entry name" value="glycerol-3-phosphate 1-O-acyltransferase PlsY"/>
    <property type="match status" value="1"/>
</dbReference>
<dbReference type="PANTHER" id="PTHR30309:SF0">
    <property type="entry name" value="GLYCEROL-3-PHOSPHATE ACYLTRANSFERASE-RELATED"/>
    <property type="match status" value="1"/>
</dbReference>
<dbReference type="PANTHER" id="PTHR30309">
    <property type="entry name" value="INNER MEMBRANE PROTEIN YGIH"/>
    <property type="match status" value="1"/>
</dbReference>
<dbReference type="Pfam" id="PF02660">
    <property type="entry name" value="G3P_acyltransf"/>
    <property type="match status" value="1"/>
</dbReference>
<dbReference type="SMART" id="SM01207">
    <property type="entry name" value="G3P_acyltransf"/>
    <property type="match status" value="1"/>
</dbReference>
<organism>
    <name type="scientific">Caulobacter vibrioides (strain ATCC 19089 / CIP 103742 / CB 15)</name>
    <name type="common">Caulobacter crescentus</name>
    <dbReference type="NCBI Taxonomy" id="190650"/>
    <lineage>
        <taxon>Bacteria</taxon>
        <taxon>Pseudomonadati</taxon>
        <taxon>Pseudomonadota</taxon>
        <taxon>Alphaproteobacteria</taxon>
        <taxon>Caulobacterales</taxon>
        <taxon>Caulobacteraceae</taxon>
        <taxon>Caulobacter</taxon>
    </lineage>
</organism>
<gene>
    <name evidence="1" type="primary">plsY</name>
    <name type="ordered locus">CC_2446</name>
</gene>
<accession>Q9A5K1</accession>
<feature type="chain" id="PRO_0000188343" description="Glycerol-3-phosphate acyltransferase">
    <location>
        <begin position="1"/>
        <end position="218"/>
    </location>
</feature>
<feature type="transmembrane region" description="Helical" evidence="1">
    <location>
        <begin position="10"/>
        <end position="30"/>
    </location>
</feature>
<feature type="transmembrane region" description="Helical" evidence="1">
    <location>
        <begin position="60"/>
        <end position="80"/>
    </location>
</feature>
<feature type="transmembrane region" description="Helical" evidence="1">
    <location>
        <begin position="88"/>
        <end position="108"/>
    </location>
</feature>
<feature type="transmembrane region" description="Helical" evidence="1">
    <location>
        <begin position="125"/>
        <end position="145"/>
    </location>
</feature>
<feature type="transmembrane region" description="Helical" evidence="1">
    <location>
        <begin position="165"/>
        <end position="185"/>
    </location>
</feature>
<comment type="function">
    <text evidence="1">Catalyzes the transfer of an acyl group from acyl-phosphate (acyl-PO(4)) to glycerol-3-phosphate (G3P) to form lysophosphatidic acid (LPA). This enzyme utilizes acyl-phosphate as fatty acyl donor, but not acyl-CoA or acyl-ACP.</text>
</comment>
<comment type="catalytic activity">
    <reaction evidence="1">
        <text>an acyl phosphate + sn-glycerol 3-phosphate = a 1-acyl-sn-glycero-3-phosphate + phosphate</text>
        <dbReference type="Rhea" id="RHEA:34075"/>
        <dbReference type="ChEBI" id="CHEBI:43474"/>
        <dbReference type="ChEBI" id="CHEBI:57597"/>
        <dbReference type="ChEBI" id="CHEBI:57970"/>
        <dbReference type="ChEBI" id="CHEBI:59918"/>
        <dbReference type="EC" id="2.3.1.275"/>
    </reaction>
</comment>
<comment type="pathway">
    <text evidence="1">Lipid metabolism; phospholipid metabolism.</text>
</comment>
<comment type="subunit">
    <text evidence="1">Probably interacts with PlsX.</text>
</comment>
<comment type="subcellular location">
    <subcellularLocation>
        <location evidence="1">Cell inner membrane</location>
        <topology evidence="1">Multi-pass membrane protein</topology>
    </subcellularLocation>
</comment>
<comment type="similarity">
    <text evidence="1">Belongs to the PlsY family.</text>
</comment>
<keyword id="KW-0997">Cell inner membrane</keyword>
<keyword id="KW-1003">Cell membrane</keyword>
<keyword id="KW-0444">Lipid biosynthesis</keyword>
<keyword id="KW-0443">Lipid metabolism</keyword>
<keyword id="KW-0472">Membrane</keyword>
<keyword id="KW-0594">Phospholipid biosynthesis</keyword>
<keyword id="KW-1208">Phospholipid metabolism</keyword>
<keyword id="KW-1185">Reference proteome</keyword>
<keyword id="KW-0808">Transferase</keyword>
<keyword id="KW-0812">Transmembrane</keyword>
<keyword id="KW-1133">Transmembrane helix</keyword>
<proteinExistence type="inferred from homology"/>
<protein>
    <recommendedName>
        <fullName evidence="1">Glycerol-3-phosphate acyltransferase</fullName>
    </recommendedName>
    <alternativeName>
        <fullName evidence="1">Acyl-PO4 G3P acyltransferase</fullName>
    </alternativeName>
    <alternativeName>
        <fullName evidence="1">Acyl-phosphate--glycerol-3-phosphate acyltransferase</fullName>
    </alternativeName>
    <alternativeName>
        <fullName evidence="1">G3P acyltransferase</fullName>
        <shortName evidence="1">GPAT</shortName>
        <ecNumber evidence="1">2.3.1.275</ecNumber>
    </alternativeName>
    <alternativeName>
        <fullName evidence="1">Lysophosphatidic acid synthase</fullName>
        <shortName evidence="1">LPA synthase</shortName>
    </alternativeName>
</protein>